<organism>
    <name type="scientific">Galdieria sulphuraria</name>
    <name type="common">Red alga</name>
    <dbReference type="NCBI Taxonomy" id="130081"/>
    <lineage>
        <taxon>Eukaryota</taxon>
        <taxon>Rhodophyta</taxon>
        <taxon>Bangiophyceae</taxon>
        <taxon>Galdieriales</taxon>
        <taxon>Galdieriaceae</taxon>
        <taxon>Galdieria</taxon>
    </lineage>
</organism>
<evidence type="ECO:0000255" key="1">
    <source>
        <dbReference type="HAMAP-Rule" id="MF_01496"/>
    </source>
</evidence>
<evidence type="ECO:0000305" key="2"/>
<reference key="1">
    <citation type="journal article" date="1992" name="Plant Mol. Biol.">
        <title>An equivalent to bacterial ompR genes is encoded on the plastid genome of red algae.</title>
        <authorList>
            <person name="Kessler U."/>
            <person name="Maid U."/>
            <person name="Zetsche K."/>
        </authorList>
    </citation>
    <scope>NUCLEOTIDE SEQUENCE [GENOMIC DNA]</scope>
    <source>
        <strain>14-1-1 / Isolate 107.79/Goettingen</strain>
    </source>
</reference>
<reference key="2">
    <citation type="journal article" date="1992" name="Plant Mol. Biol.">
        <title>A 16 kb small single-copy region separates the plastid DNA inverted repeat of the unicellular red alga Cyanidium caldarium: physical mapping of the IR-flanking regions and nucleotide sequences of the psbD, psbC, rps16, 5S rRNA and rpl21 genes.</title>
        <authorList>
            <person name="Maid U."/>
            <person name="Zetsche K."/>
        </authorList>
    </citation>
    <scope>NUCLEOTIDE SEQUENCE [GENOMIC DNA]</scope>
    <source>
        <strain>14-1-1 / Isolate 107.79/Goettingen</strain>
    </source>
</reference>
<comment type="function">
    <text evidence="1">One of the components of the core complex of photosystem II (PSII). It binds chlorophyll and helps catalyze the primary light-induced photochemical processes of PSII. PSII is a light-driven water:plastoquinone oxidoreductase, using light energy to abstract electrons from H(2)O, generating O(2) and a proton gradient subsequently used for ATP formation.</text>
</comment>
<comment type="cofactor">
    <text evidence="1">Binds multiple chlorophylls and provides some of the ligands for the Ca-4Mn-5O cluster of the oxygen-evolving complex. It may also provide a ligand for a Cl- that is required for oxygen evolution. PSII binds additional chlorophylls, carotenoids and specific lipids.</text>
</comment>
<comment type="subunit">
    <text evidence="2">PSII is composed of 1 copy each of membrane proteins PsbA, PsbB, PsbC, PsbD, PsbE, PsbF, PsbH, PsbI, PsbJ, PsbK, PsbL, PsbM, PsbT, PsbY, PsbZ, Psb30/Ycf12, at least 3 peripheral proteins of the oxygen-evolving complex and a large number of cofactors. It forms dimeric complexes.</text>
</comment>
<comment type="subcellular location">
    <subcellularLocation>
        <location evidence="1">Plastid</location>
        <location evidence="1">Chloroplast thylakoid membrane</location>
        <topology evidence="1">Multi-pass membrane protein</topology>
    </subcellularLocation>
</comment>
<comment type="miscellaneous">
    <text evidence="2">Although originally identified as Cyanidium caldarium, these sequences derive from Galdieria sulphuraria.</text>
</comment>
<comment type="similarity">
    <text evidence="1">Belongs to the PsbB/PsbC family. PsbC subfamily.</text>
</comment>
<geneLocation type="chloroplast"/>
<sequence length="473" mass="52488">MKILYSQRRFYHVEMPFNNRIEFAGRSIESTGYAWWAGNARLINVSGKLLGAHVAHAGLIVFWTGAMTLFEVAHFLPEKPLYEQGCILLPHLATLGWGVGPTGEIIDTYPYFVIGVLHLVSSAVLGFGGLYHSLIGPEILEESYPFFGYDWRDKNKMTTILGIHLILLGIGAFLLVIKAMFFGGVYDTWAPGGGDVRYINNPTLNPLVIFGYLLKSPFGGDGWIISVNNMEDLIGGHIWIGLICIGGGIWHILTKPFGWARRAFVWSGEAYLSYSLAALSLMGFIACIYVWYNNTAYPSEFYGPTGPEASQAQAFTFLVRDQRLGENVASAQGPTGLGKYLMRSPSGEVIFGGETMRFWDLRAPWLEPLRGPNGLDLNKIKNDIQPWQERRAAEYMTHAPLGSINSVGGVATEINSFNYVSPRSWLTTSHFVLGFFLFVAHLWHAGRARAAAAGFEKGINRENEPVLSMKLID</sequence>
<gene>
    <name evidence="1" type="primary">psbC</name>
</gene>
<accession>P28254</accession>
<name>PSBC_GALSU</name>
<proteinExistence type="inferred from homology"/>
<keyword id="KW-0148">Chlorophyll</keyword>
<keyword id="KW-0150">Chloroplast</keyword>
<keyword id="KW-0157">Chromophore</keyword>
<keyword id="KW-0464">Manganese</keyword>
<keyword id="KW-0472">Membrane</keyword>
<keyword id="KW-0479">Metal-binding</keyword>
<keyword id="KW-0602">Photosynthesis</keyword>
<keyword id="KW-0604">Photosystem II</keyword>
<keyword id="KW-0934">Plastid</keyword>
<keyword id="KW-0793">Thylakoid</keyword>
<keyword id="KW-0812">Transmembrane</keyword>
<keyword id="KW-1133">Transmembrane helix</keyword>
<protein>
    <recommendedName>
        <fullName evidence="1">Photosystem II CP43 reaction center protein</fullName>
    </recommendedName>
    <alternativeName>
        <fullName evidence="1">PSII 43 kDa protein</fullName>
    </alternativeName>
    <alternativeName>
        <fullName evidence="1">Protein CP-43</fullName>
    </alternativeName>
</protein>
<feature type="propeptide" id="PRO_0000431223" evidence="1">
    <location>
        <begin position="1"/>
        <end position="14"/>
    </location>
</feature>
<feature type="chain" id="PRO_0000077514" description="Photosystem II CP43 reaction center protein" evidence="1">
    <location>
        <begin position="15"/>
        <end position="473"/>
    </location>
</feature>
<feature type="transmembrane region" description="Helical" evidence="1">
    <location>
        <begin position="69"/>
        <end position="93"/>
    </location>
</feature>
<feature type="transmembrane region" description="Helical" evidence="1">
    <location>
        <begin position="134"/>
        <end position="155"/>
    </location>
</feature>
<feature type="transmembrane region" description="Helical" evidence="1">
    <location>
        <begin position="178"/>
        <end position="200"/>
    </location>
</feature>
<feature type="transmembrane region" description="Helical" evidence="1">
    <location>
        <begin position="255"/>
        <end position="275"/>
    </location>
</feature>
<feature type="transmembrane region" description="Helical" evidence="1">
    <location>
        <begin position="291"/>
        <end position="312"/>
    </location>
</feature>
<feature type="transmembrane region" description="Helical" evidence="1">
    <location>
        <begin position="447"/>
        <end position="471"/>
    </location>
</feature>
<feature type="binding site" evidence="1">
    <location>
        <position position="367"/>
    </location>
    <ligand>
        <name>[CaMn4O5] cluster</name>
        <dbReference type="ChEBI" id="CHEBI:189552"/>
    </ligand>
</feature>
<dbReference type="EMBL" id="X62578">
    <property type="protein sequence ID" value="CAA44460.1"/>
    <property type="molecule type" value="Genomic_DNA"/>
</dbReference>
<dbReference type="SMR" id="P28254"/>
<dbReference type="eggNOG" id="ENOG502QR3X">
    <property type="taxonomic scope" value="Eukaryota"/>
</dbReference>
<dbReference type="GO" id="GO:0009535">
    <property type="term" value="C:chloroplast thylakoid membrane"/>
    <property type="evidence" value="ECO:0007669"/>
    <property type="project" value="UniProtKB-SubCell"/>
</dbReference>
<dbReference type="GO" id="GO:0009523">
    <property type="term" value="C:photosystem II"/>
    <property type="evidence" value="ECO:0007669"/>
    <property type="project" value="UniProtKB-KW"/>
</dbReference>
<dbReference type="GO" id="GO:0016168">
    <property type="term" value="F:chlorophyll binding"/>
    <property type="evidence" value="ECO:0007669"/>
    <property type="project" value="UniProtKB-UniRule"/>
</dbReference>
<dbReference type="GO" id="GO:0045156">
    <property type="term" value="F:electron transporter, transferring electrons within the cyclic electron transport pathway of photosynthesis activity"/>
    <property type="evidence" value="ECO:0007669"/>
    <property type="project" value="InterPro"/>
</dbReference>
<dbReference type="GO" id="GO:0046872">
    <property type="term" value="F:metal ion binding"/>
    <property type="evidence" value="ECO:0007669"/>
    <property type="project" value="UniProtKB-KW"/>
</dbReference>
<dbReference type="GO" id="GO:0009772">
    <property type="term" value="P:photosynthetic electron transport in photosystem II"/>
    <property type="evidence" value="ECO:0007669"/>
    <property type="project" value="InterPro"/>
</dbReference>
<dbReference type="FunFam" id="1.10.10.670:FF:000001">
    <property type="entry name" value="Photosystem II CP43 reaction center protein"/>
    <property type="match status" value="1"/>
</dbReference>
<dbReference type="Gene3D" id="1.10.10.670">
    <property type="entry name" value="photosystem ii from thermosynechococcus elongatus"/>
    <property type="match status" value="1"/>
</dbReference>
<dbReference type="HAMAP" id="MF_01496">
    <property type="entry name" value="PSII_PsbC_CP43"/>
    <property type="match status" value="1"/>
</dbReference>
<dbReference type="InterPro" id="IPR000932">
    <property type="entry name" value="PS_antenna-like"/>
</dbReference>
<dbReference type="InterPro" id="IPR036001">
    <property type="entry name" value="PS_II_antenna-like_sf"/>
</dbReference>
<dbReference type="InterPro" id="IPR005869">
    <property type="entry name" value="PSII_PsbC"/>
</dbReference>
<dbReference type="InterPro" id="IPR044900">
    <property type="entry name" value="PSII_PsbC_sf"/>
</dbReference>
<dbReference type="NCBIfam" id="TIGR03041">
    <property type="entry name" value="PS_antenn_a_b"/>
    <property type="match status" value="1"/>
</dbReference>
<dbReference type="NCBIfam" id="TIGR01153">
    <property type="entry name" value="psbC"/>
    <property type="match status" value="1"/>
</dbReference>
<dbReference type="Pfam" id="PF00421">
    <property type="entry name" value="PSII"/>
    <property type="match status" value="1"/>
</dbReference>
<dbReference type="SUPFAM" id="SSF161077">
    <property type="entry name" value="Photosystem II antenna protein-like"/>
    <property type="match status" value="1"/>
</dbReference>